<dbReference type="EC" id="2.7.7.-" evidence="1"/>
<dbReference type="EC" id="2.7.7.108" evidence="1"/>
<dbReference type="EMBL" id="BX640414">
    <property type="protein sequence ID" value="CAE41388.1"/>
    <property type="molecule type" value="Genomic_DNA"/>
</dbReference>
<dbReference type="RefSeq" id="NP_879872.1">
    <property type="nucleotide sequence ID" value="NC_002929.2"/>
</dbReference>
<dbReference type="RefSeq" id="WP_010930181.1">
    <property type="nucleotide sequence ID" value="NZ_CP039022.1"/>
</dbReference>
<dbReference type="SMR" id="Q7VZ47"/>
<dbReference type="STRING" id="257313.BP1090"/>
<dbReference type="PaxDb" id="257313-BP1090"/>
<dbReference type="KEGG" id="bpe:BP1090"/>
<dbReference type="PATRIC" id="fig|257313.5.peg.1166"/>
<dbReference type="eggNOG" id="COG0397">
    <property type="taxonomic scope" value="Bacteria"/>
</dbReference>
<dbReference type="HOGENOM" id="CLU_010245_4_0_4"/>
<dbReference type="Proteomes" id="UP000002676">
    <property type="component" value="Chromosome"/>
</dbReference>
<dbReference type="GO" id="GO:0070733">
    <property type="term" value="F:AMPylase activity"/>
    <property type="evidence" value="ECO:0007669"/>
    <property type="project" value="RHEA"/>
</dbReference>
<dbReference type="GO" id="GO:0005524">
    <property type="term" value="F:ATP binding"/>
    <property type="evidence" value="ECO:0007669"/>
    <property type="project" value="UniProtKB-UniRule"/>
</dbReference>
<dbReference type="GO" id="GO:0000287">
    <property type="term" value="F:magnesium ion binding"/>
    <property type="evidence" value="ECO:0007669"/>
    <property type="project" value="UniProtKB-UniRule"/>
</dbReference>
<dbReference type="HAMAP" id="MF_00692">
    <property type="entry name" value="YdiU_SelO"/>
    <property type="match status" value="1"/>
</dbReference>
<dbReference type="InterPro" id="IPR003846">
    <property type="entry name" value="SelO"/>
</dbReference>
<dbReference type="NCBIfam" id="NF000658">
    <property type="entry name" value="PRK00029.1"/>
    <property type="match status" value="1"/>
</dbReference>
<dbReference type="PANTHER" id="PTHR32057">
    <property type="entry name" value="PROTEIN ADENYLYLTRANSFERASE SELO, MITOCHONDRIAL"/>
    <property type="match status" value="1"/>
</dbReference>
<dbReference type="PANTHER" id="PTHR32057:SF14">
    <property type="entry name" value="PROTEIN ADENYLYLTRANSFERASE SELO, MITOCHONDRIAL"/>
    <property type="match status" value="1"/>
</dbReference>
<dbReference type="Pfam" id="PF02696">
    <property type="entry name" value="SelO"/>
    <property type="match status" value="1"/>
</dbReference>
<accession>Q7VZ47</accession>
<sequence>MKWLRLQDLPTDNSFAALPAEFYTRLQPRPPAAPRLLHANAEAAALIGLDPAEFSTQAFLDVFSGHAPLPGGDTLAAVYSGHQFGVWAGQLGEVRGPAGGWELQLKGAGMTPYSRMGDGRAVLRSSVREYLASEAMHGLGIPTTRSLALVVSDDPVMRETVETAAVVTRMAPSFVRFGSFEHWSARRQPEQLRVLADYVIDRFYPECRVAGAGRLDGEHGEILGLLAAVTRRTALLMADWQAVGFCHGVMNTDNMSILGLTLDYGPYGFMDTFQLGHICNHSDSEGRYAWNRQPSVGLWNLYRLASSLHTLAPDPEALRAVLDGYEAVFTQAFHGRMAGKLGLPQFLPEDETLLDDLLQLMHQQGADFTLAFRRLGEAVRGQRQPFEDSFIDRAAAGAWYDRLAARHASDGRAAQARAAAMDEVNPLYVLRNHLAEQAIRAAARGDAGEIDILLKLLRNPYKHQPGYDAYAGLAPDWAAGLEVSCSS</sequence>
<keyword id="KW-0067">ATP-binding</keyword>
<keyword id="KW-0460">Magnesium</keyword>
<keyword id="KW-0464">Manganese</keyword>
<keyword id="KW-0479">Metal-binding</keyword>
<keyword id="KW-0547">Nucleotide-binding</keyword>
<keyword id="KW-0548">Nucleotidyltransferase</keyword>
<keyword id="KW-1185">Reference proteome</keyword>
<keyword id="KW-0808">Transferase</keyword>
<name>SELO_BORPE</name>
<proteinExistence type="inferred from homology"/>
<reference key="1">
    <citation type="journal article" date="2003" name="Nat. Genet.">
        <title>Comparative analysis of the genome sequences of Bordetella pertussis, Bordetella parapertussis and Bordetella bronchiseptica.</title>
        <authorList>
            <person name="Parkhill J."/>
            <person name="Sebaihia M."/>
            <person name="Preston A."/>
            <person name="Murphy L.D."/>
            <person name="Thomson N.R."/>
            <person name="Harris D.E."/>
            <person name="Holden M.T.G."/>
            <person name="Churcher C.M."/>
            <person name="Bentley S.D."/>
            <person name="Mungall K.L."/>
            <person name="Cerdeno-Tarraga A.-M."/>
            <person name="Temple L."/>
            <person name="James K.D."/>
            <person name="Harris B."/>
            <person name="Quail M.A."/>
            <person name="Achtman M."/>
            <person name="Atkin R."/>
            <person name="Baker S."/>
            <person name="Basham D."/>
            <person name="Bason N."/>
            <person name="Cherevach I."/>
            <person name="Chillingworth T."/>
            <person name="Collins M."/>
            <person name="Cronin A."/>
            <person name="Davis P."/>
            <person name="Doggett J."/>
            <person name="Feltwell T."/>
            <person name="Goble A."/>
            <person name="Hamlin N."/>
            <person name="Hauser H."/>
            <person name="Holroyd S."/>
            <person name="Jagels K."/>
            <person name="Leather S."/>
            <person name="Moule S."/>
            <person name="Norberczak H."/>
            <person name="O'Neil S."/>
            <person name="Ormond D."/>
            <person name="Price C."/>
            <person name="Rabbinowitsch E."/>
            <person name="Rutter S."/>
            <person name="Sanders M."/>
            <person name="Saunders D."/>
            <person name="Seeger K."/>
            <person name="Sharp S."/>
            <person name="Simmonds M."/>
            <person name="Skelton J."/>
            <person name="Squares R."/>
            <person name="Squares S."/>
            <person name="Stevens K."/>
            <person name="Unwin L."/>
            <person name="Whitehead S."/>
            <person name="Barrell B.G."/>
            <person name="Maskell D.J."/>
        </authorList>
    </citation>
    <scope>NUCLEOTIDE SEQUENCE [LARGE SCALE GENOMIC DNA]</scope>
    <source>
        <strain>Tohama I / ATCC BAA-589 / NCTC 13251</strain>
    </source>
</reference>
<gene>
    <name evidence="1" type="primary">ydiU</name>
    <name evidence="1" type="synonym">selO</name>
    <name type="ordered locus">BP1090</name>
</gene>
<evidence type="ECO:0000255" key="1">
    <source>
        <dbReference type="HAMAP-Rule" id="MF_00692"/>
    </source>
</evidence>
<comment type="function">
    <text evidence="1">Nucleotidyltransferase involved in the post-translational modification of proteins. It can catalyze the addition of adenosine monophosphate (AMP) or uridine monophosphate (UMP) to a protein, resulting in modifications known as AMPylation and UMPylation.</text>
</comment>
<comment type="catalytic activity">
    <reaction evidence="1">
        <text>L-seryl-[protein] + ATP = 3-O-(5'-adenylyl)-L-seryl-[protein] + diphosphate</text>
        <dbReference type="Rhea" id="RHEA:58120"/>
        <dbReference type="Rhea" id="RHEA-COMP:9863"/>
        <dbReference type="Rhea" id="RHEA-COMP:15073"/>
        <dbReference type="ChEBI" id="CHEBI:29999"/>
        <dbReference type="ChEBI" id="CHEBI:30616"/>
        <dbReference type="ChEBI" id="CHEBI:33019"/>
        <dbReference type="ChEBI" id="CHEBI:142516"/>
        <dbReference type="EC" id="2.7.7.108"/>
    </reaction>
</comment>
<comment type="catalytic activity">
    <reaction evidence="1">
        <text>L-threonyl-[protein] + ATP = 3-O-(5'-adenylyl)-L-threonyl-[protein] + diphosphate</text>
        <dbReference type="Rhea" id="RHEA:54292"/>
        <dbReference type="Rhea" id="RHEA-COMP:11060"/>
        <dbReference type="Rhea" id="RHEA-COMP:13847"/>
        <dbReference type="ChEBI" id="CHEBI:30013"/>
        <dbReference type="ChEBI" id="CHEBI:30616"/>
        <dbReference type="ChEBI" id="CHEBI:33019"/>
        <dbReference type="ChEBI" id="CHEBI:138113"/>
        <dbReference type="EC" id="2.7.7.108"/>
    </reaction>
</comment>
<comment type="catalytic activity">
    <reaction evidence="1">
        <text>L-tyrosyl-[protein] + ATP = O-(5'-adenylyl)-L-tyrosyl-[protein] + diphosphate</text>
        <dbReference type="Rhea" id="RHEA:54288"/>
        <dbReference type="Rhea" id="RHEA-COMP:10136"/>
        <dbReference type="Rhea" id="RHEA-COMP:13846"/>
        <dbReference type="ChEBI" id="CHEBI:30616"/>
        <dbReference type="ChEBI" id="CHEBI:33019"/>
        <dbReference type="ChEBI" id="CHEBI:46858"/>
        <dbReference type="ChEBI" id="CHEBI:83624"/>
        <dbReference type="EC" id="2.7.7.108"/>
    </reaction>
</comment>
<comment type="catalytic activity">
    <reaction evidence="1">
        <text>L-histidyl-[protein] + UTP = N(tele)-(5'-uridylyl)-L-histidyl-[protein] + diphosphate</text>
        <dbReference type="Rhea" id="RHEA:83891"/>
        <dbReference type="Rhea" id="RHEA-COMP:9745"/>
        <dbReference type="Rhea" id="RHEA-COMP:20239"/>
        <dbReference type="ChEBI" id="CHEBI:29979"/>
        <dbReference type="ChEBI" id="CHEBI:33019"/>
        <dbReference type="ChEBI" id="CHEBI:46398"/>
        <dbReference type="ChEBI" id="CHEBI:233474"/>
    </reaction>
</comment>
<comment type="catalytic activity">
    <reaction evidence="1">
        <text>L-seryl-[protein] + UTP = O-(5'-uridylyl)-L-seryl-[protein] + diphosphate</text>
        <dbReference type="Rhea" id="RHEA:64604"/>
        <dbReference type="Rhea" id="RHEA-COMP:9863"/>
        <dbReference type="Rhea" id="RHEA-COMP:16635"/>
        <dbReference type="ChEBI" id="CHEBI:29999"/>
        <dbReference type="ChEBI" id="CHEBI:33019"/>
        <dbReference type="ChEBI" id="CHEBI:46398"/>
        <dbReference type="ChEBI" id="CHEBI:156051"/>
    </reaction>
</comment>
<comment type="catalytic activity">
    <reaction evidence="1">
        <text>L-tyrosyl-[protein] + UTP = O-(5'-uridylyl)-L-tyrosyl-[protein] + diphosphate</text>
        <dbReference type="Rhea" id="RHEA:83887"/>
        <dbReference type="Rhea" id="RHEA-COMP:10136"/>
        <dbReference type="Rhea" id="RHEA-COMP:20238"/>
        <dbReference type="ChEBI" id="CHEBI:33019"/>
        <dbReference type="ChEBI" id="CHEBI:46398"/>
        <dbReference type="ChEBI" id="CHEBI:46858"/>
        <dbReference type="ChEBI" id="CHEBI:90602"/>
    </reaction>
</comment>
<comment type="cofactor">
    <cofactor evidence="1">
        <name>Mg(2+)</name>
        <dbReference type="ChEBI" id="CHEBI:18420"/>
    </cofactor>
    <cofactor evidence="1">
        <name>Mn(2+)</name>
        <dbReference type="ChEBI" id="CHEBI:29035"/>
    </cofactor>
</comment>
<comment type="similarity">
    <text evidence="1">Belongs to the SELO family.</text>
</comment>
<feature type="chain" id="PRO_0000121410" description="Protein nucleotidyltransferase YdiU">
    <location>
        <begin position="1"/>
        <end position="487"/>
    </location>
</feature>
<feature type="active site" description="Proton acceptor" evidence="1">
    <location>
        <position position="253"/>
    </location>
</feature>
<feature type="binding site" evidence="1">
    <location>
        <position position="92"/>
    </location>
    <ligand>
        <name>ATP</name>
        <dbReference type="ChEBI" id="CHEBI:30616"/>
    </ligand>
</feature>
<feature type="binding site" evidence="1">
    <location>
        <position position="95"/>
    </location>
    <ligand>
        <name>ATP</name>
        <dbReference type="ChEBI" id="CHEBI:30616"/>
    </ligand>
</feature>
<feature type="binding site" evidence="1">
    <location>
        <position position="106"/>
    </location>
    <ligand>
        <name>ATP</name>
        <dbReference type="ChEBI" id="CHEBI:30616"/>
    </ligand>
</feature>
<feature type="binding site" evidence="1">
    <location>
        <position position="118"/>
    </location>
    <ligand>
        <name>ATP</name>
        <dbReference type="ChEBI" id="CHEBI:30616"/>
    </ligand>
</feature>
<feature type="binding site" evidence="1">
    <location>
        <position position="119"/>
    </location>
    <ligand>
        <name>ATP</name>
        <dbReference type="ChEBI" id="CHEBI:30616"/>
    </ligand>
</feature>
<feature type="binding site" evidence="1">
    <location>
        <position position="169"/>
    </location>
    <ligand>
        <name>ATP</name>
        <dbReference type="ChEBI" id="CHEBI:30616"/>
    </ligand>
</feature>
<feature type="binding site" evidence="1">
    <location>
        <position position="176"/>
    </location>
    <ligand>
        <name>ATP</name>
        <dbReference type="ChEBI" id="CHEBI:30616"/>
    </ligand>
</feature>
<feature type="binding site" evidence="1">
    <location>
        <position position="254"/>
    </location>
    <ligand>
        <name>Mg(2+)</name>
        <dbReference type="ChEBI" id="CHEBI:18420"/>
    </ligand>
</feature>
<feature type="binding site" evidence="1">
    <location>
        <position position="263"/>
    </location>
    <ligand>
        <name>ATP</name>
        <dbReference type="ChEBI" id="CHEBI:30616"/>
    </ligand>
</feature>
<feature type="binding site" evidence="1">
    <location>
        <position position="263"/>
    </location>
    <ligand>
        <name>Mg(2+)</name>
        <dbReference type="ChEBI" id="CHEBI:18420"/>
    </ligand>
</feature>
<protein>
    <recommendedName>
        <fullName evidence="1">Protein nucleotidyltransferase YdiU</fullName>
        <ecNumber evidence="1">2.7.7.-</ecNumber>
    </recommendedName>
    <alternativeName>
        <fullName evidence="1">Protein adenylyltransferase YdiU</fullName>
        <ecNumber evidence="1">2.7.7.108</ecNumber>
    </alternativeName>
    <alternativeName>
        <fullName evidence="1">Protein uridylyltransferase YdiU</fullName>
        <ecNumber evidence="1">2.7.7.-</ecNumber>
    </alternativeName>
</protein>
<organism>
    <name type="scientific">Bordetella pertussis (strain Tohama I / ATCC BAA-589 / NCTC 13251)</name>
    <dbReference type="NCBI Taxonomy" id="257313"/>
    <lineage>
        <taxon>Bacteria</taxon>
        <taxon>Pseudomonadati</taxon>
        <taxon>Pseudomonadota</taxon>
        <taxon>Betaproteobacteria</taxon>
        <taxon>Burkholderiales</taxon>
        <taxon>Alcaligenaceae</taxon>
        <taxon>Bordetella</taxon>
    </lineage>
</organism>